<dbReference type="EMBL" id="AM421808">
    <property type="protein sequence ID" value="CAM09464.1"/>
    <property type="molecule type" value="Genomic_DNA"/>
</dbReference>
<dbReference type="RefSeq" id="WP_002215437.1">
    <property type="nucleotide sequence ID" value="NC_008767.1"/>
</dbReference>
<dbReference type="SMR" id="A1KRI6"/>
<dbReference type="KEGG" id="nmc:NMC0145"/>
<dbReference type="HOGENOM" id="CLU_139869_0_1_4"/>
<dbReference type="Proteomes" id="UP000002286">
    <property type="component" value="Chromosome"/>
</dbReference>
<dbReference type="GO" id="GO:0005737">
    <property type="term" value="C:cytoplasm"/>
    <property type="evidence" value="ECO:0007669"/>
    <property type="project" value="UniProtKB-ARBA"/>
</dbReference>
<dbReference type="GO" id="GO:0015935">
    <property type="term" value="C:small ribosomal subunit"/>
    <property type="evidence" value="ECO:0007669"/>
    <property type="project" value="TreeGrafter"/>
</dbReference>
<dbReference type="GO" id="GO:0019843">
    <property type="term" value="F:rRNA binding"/>
    <property type="evidence" value="ECO:0007669"/>
    <property type="project" value="UniProtKB-UniRule"/>
</dbReference>
<dbReference type="GO" id="GO:0003735">
    <property type="term" value="F:structural constituent of ribosome"/>
    <property type="evidence" value="ECO:0007669"/>
    <property type="project" value="InterPro"/>
</dbReference>
<dbReference type="GO" id="GO:0006412">
    <property type="term" value="P:translation"/>
    <property type="evidence" value="ECO:0007669"/>
    <property type="project" value="UniProtKB-UniRule"/>
</dbReference>
<dbReference type="FunFam" id="1.10.287.1480:FF:000001">
    <property type="entry name" value="30S ribosomal protein S14"/>
    <property type="match status" value="1"/>
</dbReference>
<dbReference type="Gene3D" id="1.10.287.1480">
    <property type="match status" value="1"/>
</dbReference>
<dbReference type="HAMAP" id="MF_00537">
    <property type="entry name" value="Ribosomal_uS14_1"/>
    <property type="match status" value="1"/>
</dbReference>
<dbReference type="InterPro" id="IPR001209">
    <property type="entry name" value="Ribosomal_uS14"/>
</dbReference>
<dbReference type="InterPro" id="IPR023036">
    <property type="entry name" value="Ribosomal_uS14_bac/plastid"/>
</dbReference>
<dbReference type="NCBIfam" id="NF006477">
    <property type="entry name" value="PRK08881.1"/>
    <property type="match status" value="1"/>
</dbReference>
<dbReference type="PANTHER" id="PTHR19836">
    <property type="entry name" value="30S RIBOSOMAL PROTEIN S14"/>
    <property type="match status" value="1"/>
</dbReference>
<dbReference type="PANTHER" id="PTHR19836:SF19">
    <property type="entry name" value="SMALL RIBOSOMAL SUBUNIT PROTEIN US14M"/>
    <property type="match status" value="1"/>
</dbReference>
<dbReference type="Pfam" id="PF00253">
    <property type="entry name" value="Ribosomal_S14"/>
    <property type="match status" value="1"/>
</dbReference>
<dbReference type="SUPFAM" id="SSF57716">
    <property type="entry name" value="Glucocorticoid receptor-like (DNA-binding domain)"/>
    <property type="match status" value="1"/>
</dbReference>
<protein>
    <recommendedName>
        <fullName evidence="1">Small ribosomal subunit protein uS14</fullName>
    </recommendedName>
    <alternativeName>
        <fullName evidence="2">30S ribosomal protein S14</fullName>
    </alternativeName>
</protein>
<evidence type="ECO:0000255" key="1">
    <source>
        <dbReference type="HAMAP-Rule" id="MF_00537"/>
    </source>
</evidence>
<evidence type="ECO:0000305" key="2"/>
<gene>
    <name evidence="1" type="primary">rpsN</name>
    <name type="ordered locus">NMC0145</name>
</gene>
<reference key="1">
    <citation type="journal article" date="2007" name="PLoS Genet.">
        <title>Meningococcal genetic variation mechanisms viewed through comparative analysis of serogroup C strain FAM18.</title>
        <authorList>
            <person name="Bentley S.D."/>
            <person name="Vernikos G.S."/>
            <person name="Snyder L.A.S."/>
            <person name="Churcher C."/>
            <person name="Arrowsmith C."/>
            <person name="Chillingworth T."/>
            <person name="Cronin A."/>
            <person name="Davis P.H."/>
            <person name="Holroyd N.E."/>
            <person name="Jagels K."/>
            <person name="Maddison M."/>
            <person name="Moule S."/>
            <person name="Rabbinowitsch E."/>
            <person name="Sharp S."/>
            <person name="Unwin L."/>
            <person name="Whitehead S."/>
            <person name="Quail M.A."/>
            <person name="Achtman M."/>
            <person name="Barrell B.G."/>
            <person name="Saunders N.J."/>
            <person name="Parkhill J."/>
        </authorList>
    </citation>
    <scope>NUCLEOTIDE SEQUENCE [LARGE SCALE GENOMIC DNA]</scope>
    <source>
        <strain>ATCC 700532 / DSM 15464 / FAM18</strain>
    </source>
</reference>
<organism>
    <name type="scientific">Neisseria meningitidis serogroup C / serotype 2a (strain ATCC 700532 / DSM 15464 / FAM18)</name>
    <dbReference type="NCBI Taxonomy" id="272831"/>
    <lineage>
        <taxon>Bacteria</taxon>
        <taxon>Pseudomonadati</taxon>
        <taxon>Pseudomonadota</taxon>
        <taxon>Betaproteobacteria</taxon>
        <taxon>Neisseriales</taxon>
        <taxon>Neisseriaceae</taxon>
        <taxon>Neisseria</taxon>
    </lineage>
</organism>
<accession>A1KRI6</accession>
<comment type="function">
    <text evidence="1">Binds 16S rRNA, required for the assembly of 30S particles and may also be responsible for determining the conformation of the 16S rRNA at the A site.</text>
</comment>
<comment type="subunit">
    <text evidence="1">Part of the 30S ribosomal subunit. Contacts proteins S3 and S10.</text>
</comment>
<comment type="similarity">
    <text evidence="1">Belongs to the universal ribosomal protein uS14 family.</text>
</comment>
<feature type="chain" id="PRO_1000128462" description="Small ribosomal subunit protein uS14">
    <location>
        <begin position="1"/>
        <end position="101"/>
    </location>
</feature>
<sequence>MAKKALINRNLKRQALAKKYAAKRAAIKAVINDSNATEEERFEARLRFQSIPRNAAPVRQRRRCALTGRPRGTFRKFGLGRIKIREIAMRGEIPGVVKASW</sequence>
<proteinExistence type="inferred from homology"/>
<keyword id="KW-0687">Ribonucleoprotein</keyword>
<keyword id="KW-0689">Ribosomal protein</keyword>
<keyword id="KW-0694">RNA-binding</keyword>
<keyword id="KW-0699">rRNA-binding</keyword>
<name>RS14_NEIMF</name>